<organism>
    <name type="scientific">Campylobacter fetus subsp. fetus (strain 82-40)</name>
    <dbReference type="NCBI Taxonomy" id="360106"/>
    <lineage>
        <taxon>Bacteria</taxon>
        <taxon>Pseudomonadati</taxon>
        <taxon>Campylobacterota</taxon>
        <taxon>Epsilonproteobacteria</taxon>
        <taxon>Campylobacterales</taxon>
        <taxon>Campylobacteraceae</taxon>
        <taxon>Campylobacter</taxon>
    </lineage>
</organism>
<gene>
    <name evidence="1" type="primary">rplP</name>
    <name type="ordered locus">CFF8240_0041</name>
</gene>
<keyword id="KW-0687">Ribonucleoprotein</keyword>
<keyword id="KW-0689">Ribosomal protein</keyword>
<keyword id="KW-0694">RNA-binding</keyword>
<keyword id="KW-0699">rRNA-binding</keyword>
<keyword id="KW-0820">tRNA-binding</keyword>
<name>RL16_CAMFF</name>
<protein>
    <recommendedName>
        <fullName evidence="1">Large ribosomal subunit protein uL16</fullName>
    </recommendedName>
    <alternativeName>
        <fullName evidence="2">50S ribosomal protein L16</fullName>
    </alternativeName>
</protein>
<proteinExistence type="inferred from homology"/>
<accession>A0RM18</accession>
<evidence type="ECO:0000255" key="1">
    <source>
        <dbReference type="HAMAP-Rule" id="MF_01342"/>
    </source>
</evidence>
<evidence type="ECO:0000305" key="2"/>
<comment type="function">
    <text evidence="1">Binds 23S rRNA and is also seen to make contacts with the A and possibly P site tRNAs.</text>
</comment>
<comment type="subunit">
    <text evidence="1">Part of the 50S ribosomal subunit.</text>
</comment>
<comment type="similarity">
    <text evidence="1">Belongs to the universal ribosomal protein uL16 family.</text>
</comment>
<reference key="1">
    <citation type="submission" date="2006-11" db="EMBL/GenBank/DDBJ databases">
        <title>Sequence of Campylobacter fetus subsp. fetus 82-40.</title>
        <authorList>
            <person name="Fouts D.E."/>
            <person name="Nelson K.E."/>
        </authorList>
    </citation>
    <scope>NUCLEOTIDE SEQUENCE [LARGE SCALE GENOMIC DNA]</scope>
    <source>
        <strain>82-40</strain>
    </source>
</reference>
<feature type="chain" id="PRO_1000054598" description="Large ribosomal subunit protein uL16">
    <location>
        <begin position="1"/>
        <end position="141"/>
    </location>
</feature>
<dbReference type="EMBL" id="CP000487">
    <property type="protein sequence ID" value="ABK82850.1"/>
    <property type="molecule type" value="Genomic_DNA"/>
</dbReference>
<dbReference type="RefSeq" id="WP_002847980.1">
    <property type="nucleotide sequence ID" value="NC_008599.1"/>
</dbReference>
<dbReference type="SMR" id="A0RM18"/>
<dbReference type="GeneID" id="61063884"/>
<dbReference type="KEGG" id="cff:CFF8240_0041"/>
<dbReference type="eggNOG" id="COG0197">
    <property type="taxonomic scope" value="Bacteria"/>
</dbReference>
<dbReference type="HOGENOM" id="CLU_078858_2_1_7"/>
<dbReference type="Proteomes" id="UP000000760">
    <property type="component" value="Chromosome"/>
</dbReference>
<dbReference type="GO" id="GO:0022625">
    <property type="term" value="C:cytosolic large ribosomal subunit"/>
    <property type="evidence" value="ECO:0007669"/>
    <property type="project" value="TreeGrafter"/>
</dbReference>
<dbReference type="GO" id="GO:0019843">
    <property type="term" value="F:rRNA binding"/>
    <property type="evidence" value="ECO:0007669"/>
    <property type="project" value="UniProtKB-UniRule"/>
</dbReference>
<dbReference type="GO" id="GO:0003735">
    <property type="term" value="F:structural constituent of ribosome"/>
    <property type="evidence" value="ECO:0007669"/>
    <property type="project" value="InterPro"/>
</dbReference>
<dbReference type="GO" id="GO:0000049">
    <property type="term" value="F:tRNA binding"/>
    <property type="evidence" value="ECO:0007669"/>
    <property type="project" value="UniProtKB-KW"/>
</dbReference>
<dbReference type="GO" id="GO:0006412">
    <property type="term" value="P:translation"/>
    <property type="evidence" value="ECO:0007669"/>
    <property type="project" value="UniProtKB-UniRule"/>
</dbReference>
<dbReference type="CDD" id="cd01433">
    <property type="entry name" value="Ribosomal_L16_L10e"/>
    <property type="match status" value="1"/>
</dbReference>
<dbReference type="FunFam" id="3.90.1170.10:FF:000001">
    <property type="entry name" value="50S ribosomal protein L16"/>
    <property type="match status" value="1"/>
</dbReference>
<dbReference type="Gene3D" id="3.90.1170.10">
    <property type="entry name" value="Ribosomal protein L10e/L16"/>
    <property type="match status" value="1"/>
</dbReference>
<dbReference type="HAMAP" id="MF_01342">
    <property type="entry name" value="Ribosomal_uL16"/>
    <property type="match status" value="1"/>
</dbReference>
<dbReference type="InterPro" id="IPR047873">
    <property type="entry name" value="Ribosomal_uL16"/>
</dbReference>
<dbReference type="InterPro" id="IPR000114">
    <property type="entry name" value="Ribosomal_uL16_bact-type"/>
</dbReference>
<dbReference type="InterPro" id="IPR020798">
    <property type="entry name" value="Ribosomal_uL16_CS"/>
</dbReference>
<dbReference type="InterPro" id="IPR016180">
    <property type="entry name" value="Ribosomal_uL16_dom"/>
</dbReference>
<dbReference type="InterPro" id="IPR036920">
    <property type="entry name" value="Ribosomal_uL16_sf"/>
</dbReference>
<dbReference type="NCBIfam" id="TIGR01164">
    <property type="entry name" value="rplP_bact"/>
    <property type="match status" value="1"/>
</dbReference>
<dbReference type="PANTHER" id="PTHR12220">
    <property type="entry name" value="50S/60S RIBOSOMAL PROTEIN L16"/>
    <property type="match status" value="1"/>
</dbReference>
<dbReference type="PANTHER" id="PTHR12220:SF13">
    <property type="entry name" value="LARGE RIBOSOMAL SUBUNIT PROTEIN UL16M"/>
    <property type="match status" value="1"/>
</dbReference>
<dbReference type="Pfam" id="PF00252">
    <property type="entry name" value="Ribosomal_L16"/>
    <property type="match status" value="1"/>
</dbReference>
<dbReference type="PRINTS" id="PR00060">
    <property type="entry name" value="RIBOSOMALL16"/>
</dbReference>
<dbReference type="SUPFAM" id="SSF54686">
    <property type="entry name" value="Ribosomal protein L16p/L10e"/>
    <property type="match status" value="1"/>
</dbReference>
<dbReference type="PROSITE" id="PS00701">
    <property type="entry name" value="RIBOSOMAL_L16_2"/>
    <property type="match status" value="1"/>
</dbReference>
<sequence>MLLPKRTKYRKMMKGRNRGYATRGVDLALGEFGLKAVEAGRVNSRQIESARQAYTRHVKRQAKTWIRVFPDKPITKKPLETRMGKGKGGVEEWVMNIKPGRIIFEMSGVSEELAREALTLAMHKLPFKTKFVTKESENEVY</sequence>